<accession>Q88D93</accession>
<proteinExistence type="inferred from homology"/>
<reference key="1">
    <citation type="journal article" date="2002" name="Environ. Microbiol.">
        <title>Complete genome sequence and comparative analysis of the metabolically versatile Pseudomonas putida KT2440.</title>
        <authorList>
            <person name="Nelson K.E."/>
            <person name="Weinel C."/>
            <person name="Paulsen I.T."/>
            <person name="Dodson R.J."/>
            <person name="Hilbert H."/>
            <person name="Martins dos Santos V.A.P."/>
            <person name="Fouts D.E."/>
            <person name="Gill S.R."/>
            <person name="Pop M."/>
            <person name="Holmes M."/>
            <person name="Brinkac L.M."/>
            <person name="Beanan M.J."/>
            <person name="DeBoy R.T."/>
            <person name="Daugherty S.C."/>
            <person name="Kolonay J.F."/>
            <person name="Madupu R."/>
            <person name="Nelson W.C."/>
            <person name="White O."/>
            <person name="Peterson J.D."/>
            <person name="Khouri H.M."/>
            <person name="Hance I."/>
            <person name="Chris Lee P."/>
            <person name="Holtzapple E.K."/>
            <person name="Scanlan D."/>
            <person name="Tran K."/>
            <person name="Moazzez A."/>
            <person name="Utterback T.R."/>
            <person name="Rizzo M."/>
            <person name="Lee K."/>
            <person name="Kosack D."/>
            <person name="Moestl D."/>
            <person name="Wedler H."/>
            <person name="Lauber J."/>
            <person name="Stjepandic D."/>
            <person name="Hoheisel J."/>
            <person name="Straetz M."/>
            <person name="Heim S."/>
            <person name="Kiewitz C."/>
            <person name="Eisen J.A."/>
            <person name="Timmis K.N."/>
            <person name="Duesterhoeft A."/>
            <person name="Tuemmler B."/>
            <person name="Fraser C.M."/>
        </authorList>
    </citation>
    <scope>NUCLEOTIDE SEQUENCE [LARGE SCALE GENOMIC DNA]</scope>
    <source>
        <strain>ATCC 47054 / DSM 6125 / CFBP 8728 / NCIMB 11950 / KT2440</strain>
    </source>
</reference>
<evidence type="ECO:0000255" key="1">
    <source>
        <dbReference type="HAMAP-Rule" id="MF_01603"/>
    </source>
</evidence>
<feature type="chain" id="PRO_0000080120" description="Bifunctional protein HldE">
    <location>
        <begin position="1"/>
        <end position="473"/>
    </location>
</feature>
<feature type="region of interest" description="Ribokinase">
    <location>
        <begin position="1"/>
        <end position="318"/>
    </location>
</feature>
<feature type="region of interest" description="Cytidylyltransferase">
    <location>
        <begin position="343"/>
        <end position="473"/>
    </location>
</feature>
<feature type="active site" evidence="1">
    <location>
        <position position="263"/>
    </location>
</feature>
<feature type="binding site" evidence="1">
    <location>
        <begin position="194"/>
        <end position="197"/>
    </location>
    <ligand>
        <name>ATP</name>
        <dbReference type="ChEBI" id="CHEBI:30616"/>
    </ligand>
</feature>
<sequence length="473" mass="49970">MKLSMPRFDQAPVLVVGDVMLDRYWHGGTSRISPEAPVPVVKVDQIEDRPGGAANVALNIAALGAPASLIGVTGQDEAADSLANSLQAAGVRSVFQRIAHQPTIVKLRVMSRHQQLLRIDFEEPFATDPLSLGAEVDSLLEGVKVLVLSDYGKGALKNHQNLIQAARAKGIPVLADPKGKDFSIYRGASLITPNLSEFETIVGRCVDEAELVAKGLQLLQDLDLGALLVTRGEHGMTLLRVGQPALHLPARAREVFDVTGAGDTVISTLAAAIAAGEDLPHAVALANLAAGIVVGKLGTAAISAPELRRAIQREEGSERGVLGLEQLLLAIDDARAHNEKIVFTNGCFDILHAGHVTYLEQARAQGDRLIVAVNDDASVSRLKGPGRPINSVDRRMAVLAGLGAVDWVISFPEGTPENLLSQVKPDVLVKGGDYGIDQVVGADIVKGYGGTVKVLGLVENSSTTAIVEKIRKN</sequence>
<gene>
    <name evidence="1" type="primary">hldE</name>
    <name type="synonym">rfaE</name>
    <name type="ordered locus">PP_4934</name>
</gene>
<name>HLDE_PSEPK</name>
<organism>
    <name type="scientific">Pseudomonas putida (strain ATCC 47054 / DSM 6125 / CFBP 8728 / NCIMB 11950 / KT2440)</name>
    <dbReference type="NCBI Taxonomy" id="160488"/>
    <lineage>
        <taxon>Bacteria</taxon>
        <taxon>Pseudomonadati</taxon>
        <taxon>Pseudomonadota</taxon>
        <taxon>Gammaproteobacteria</taxon>
        <taxon>Pseudomonadales</taxon>
        <taxon>Pseudomonadaceae</taxon>
        <taxon>Pseudomonas</taxon>
    </lineage>
</organism>
<keyword id="KW-0067">ATP-binding</keyword>
<keyword id="KW-0119">Carbohydrate metabolism</keyword>
<keyword id="KW-0418">Kinase</keyword>
<keyword id="KW-0511">Multifunctional enzyme</keyword>
<keyword id="KW-0547">Nucleotide-binding</keyword>
<keyword id="KW-0548">Nucleotidyltransferase</keyword>
<keyword id="KW-1185">Reference proteome</keyword>
<keyword id="KW-0808">Transferase</keyword>
<dbReference type="EC" id="2.7.1.167" evidence="1"/>
<dbReference type="EC" id="2.7.7.70" evidence="1"/>
<dbReference type="EMBL" id="AE015451">
    <property type="protein sequence ID" value="AAN70501.1"/>
    <property type="molecule type" value="Genomic_DNA"/>
</dbReference>
<dbReference type="RefSeq" id="NP_747037.1">
    <property type="nucleotide sequence ID" value="NC_002947.4"/>
</dbReference>
<dbReference type="RefSeq" id="WP_003249449.1">
    <property type="nucleotide sequence ID" value="NZ_CP169744.1"/>
</dbReference>
<dbReference type="SMR" id="Q88D93"/>
<dbReference type="STRING" id="160488.PP_4934"/>
<dbReference type="PaxDb" id="160488-PP_4934"/>
<dbReference type="GeneID" id="83682666"/>
<dbReference type="KEGG" id="ppu:PP_4934"/>
<dbReference type="PATRIC" id="fig|160488.4.peg.5268"/>
<dbReference type="eggNOG" id="COG0615">
    <property type="taxonomic scope" value="Bacteria"/>
</dbReference>
<dbReference type="eggNOG" id="COG2870">
    <property type="taxonomic scope" value="Bacteria"/>
</dbReference>
<dbReference type="HOGENOM" id="CLU_021150_2_1_6"/>
<dbReference type="OrthoDB" id="9802794at2"/>
<dbReference type="PhylomeDB" id="Q88D93"/>
<dbReference type="BioCyc" id="PPUT160488:G1G01-5277-MONOMER"/>
<dbReference type="UniPathway" id="UPA00356">
    <property type="reaction ID" value="UER00437"/>
</dbReference>
<dbReference type="UniPathway" id="UPA00356">
    <property type="reaction ID" value="UER00439"/>
</dbReference>
<dbReference type="Proteomes" id="UP000000556">
    <property type="component" value="Chromosome"/>
</dbReference>
<dbReference type="GO" id="GO:0005829">
    <property type="term" value="C:cytosol"/>
    <property type="evidence" value="ECO:0007669"/>
    <property type="project" value="TreeGrafter"/>
</dbReference>
<dbReference type="GO" id="GO:0005524">
    <property type="term" value="F:ATP binding"/>
    <property type="evidence" value="ECO:0007669"/>
    <property type="project" value="UniProtKB-UniRule"/>
</dbReference>
<dbReference type="GO" id="GO:0033785">
    <property type="term" value="F:heptose 7-phosphate kinase activity"/>
    <property type="evidence" value="ECO:0007669"/>
    <property type="project" value="UniProtKB-UniRule"/>
</dbReference>
<dbReference type="GO" id="GO:0033786">
    <property type="term" value="F:heptose-1-phosphate adenylyltransferase activity"/>
    <property type="evidence" value="ECO:0007669"/>
    <property type="project" value="UniProtKB-UniRule"/>
</dbReference>
<dbReference type="GO" id="GO:0016773">
    <property type="term" value="F:phosphotransferase activity, alcohol group as acceptor"/>
    <property type="evidence" value="ECO:0007669"/>
    <property type="project" value="InterPro"/>
</dbReference>
<dbReference type="GO" id="GO:0097171">
    <property type="term" value="P:ADP-L-glycero-beta-D-manno-heptose biosynthetic process"/>
    <property type="evidence" value="ECO:0007669"/>
    <property type="project" value="UniProtKB-UniPathway"/>
</dbReference>
<dbReference type="CDD" id="cd01172">
    <property type="entry name" value="RfaE_like"/>
    <property type="match status" value="1"/>
</dbReference>
<dbReference type="FunFam" id="3.40.1190.20:FF:000002">
    <property type="entry name" value="Bifunctional protein HldE"/>
    <property type="match status" value="1"/>
</dbReference>
<dbReference type="FunFam" id="3.40.50.620:FF:000028">
    <property type="entry name" value="Bifunctional protein HldE"/>
    <property type="match status" value="1"/>
</dbReference>
<dbReference type="Gene3D" id="3.40.1190.20">
    <property type="match status" value="1"/>
</dbReference>
<dbReference type="Gene3D" id="3.40.50.620">
    <property type="entry name" value="HUPs"/>
    <property type="match status" value="1"/>
</dbReference>
<dbReference type="HAMAP" id="MF_01603">
    <property type="entry name" value="HldE"/>
    <property type="match status" value="1"/>
</dbReference>
<dbReference type="InterPro" id="IPR023030">
    <property type="entry name" value="Bifunc_HldE"/>
</dbReference>
<dbReference type="InterPro" id="IPR002173">
    <property type="entry name" value="Carboh/pur_kinase_PfkB_CS"/>
</dbReference>
<dbReference type="InterPro" id="IPR004821">
    <property type="entry name" value="Cyt_trans-like"/>
</dbReference>
<dbReference type="InterPro" id="IPR011611">
    <property type="entry name" value="PfkB_dom"/>
</dbReference>
<dbReference type="InterPro" id="IPR011913">
    <property type="entry name" value="RfaE_dom_I"/>
</dbReference>
<dbReference type="InterPro" id="IPR011914">
    <property type="entry name" value="RfaE_dom_II"/>
</dbReference>
<dbReference type="InterPro" id="IPR029056">
    <property type="entry name" value="Ribokinase-like"/>
</dbReference>
<dbReference type="InterPro" id="IPR014729">
    <property type="entry name" value="Rossmann-like_a/b/a_fold"/>
</dbReference>
<dbReference type="NCBIfam" id="TIGR00125">
    <property type="entry name" value="cyt_tran_rel"/>
    <property type="match status" value="1"/>
</dbReference>
<dbReference type="NCBIfam" id="NF008454">
    <property type="entry name" value="PRK11316.1"/>
    <property type="match status" value="1"/>
</dbReference>
<dbReference type="NCBIfam" id="TIGR02198">
    <property type="entry name" value="rfaE_dom_I"/>
    <property type="match status" value="1"/>
</dbReference>
<dbReference type="NCBIfam" id="TIGR02199">
    <property type="entry name" value="rfaE_dom_II"/>
    <property type="match status" value="1"/>
</dbReference>
<dbReference type="PANTHER" id="PTHR46969">
    <property type="entry name" value="BIFUNCTIONAL PROTEIN HLDE"/>
    <property type="match status" value="1"/>
</dbReference>
<dbReference type="PANTHER" id="PTHR46969:SF1">
    <property type="entry name" value="BIFUNCTIONAL PROTEIN HLDE"/>
    <property type="match status" value="1"/>
</dbReference>
<dbReference type="Pfam" id="PF01467">
    <property type="entry name" value="CTP_transf_like"/>
    <property type="match status" value="1"/>
</dbReference>
<dbReference type="Pfam" id="PF00294">
    <property type="entry name" value="PfkB"/>
    <property type="match status" value="1"/>
</dbReference>
<dbReference type="SUPFAM" id="SSF52374">
    <property type="entry name" value="Nucleotidylyl transferase"/>
    <property type="match status" value="1"/>
</dbReference>
<dbReference type="SUPFAM" id="SSF53613">
    <property type="entry name" value="Ribokinase-like"/>
    <property type="match status" value="1"/>
</dbReference>
<dbReference type="PROSITE" id="PS00583">
    <property type="entry name" value="PFKB_KINASES_1"/>
    <property type="match status" value="1"/>
</dbReference>
<protein>
    <recommendedName>
        <fullName evidence="1">Bifunctional protein HldE</fullName>
    </recommendedName>
    <domain>
        <recommendedName>
            <fullName evidence="1">D-beta-D-heptose 7-phosphate kinase</fullName>
            <ecNumber evidence="1">2.7.1.167</ecNumber>
        </recommendedName>
        <alternativeName>
            <fullName evidence="1">D-beta-D-heptose 7-phosphotransferase</fullName>
        </alternativeName>
        <alternativeName>
            <fullName evidence="1">D-glycero-beta-D-manno-heptose-7-phosphate kinase</fullName>
        </alternativeName>
    </domain>
    <domain>
        <recommendedName>
            <fullName evidence="1">D-beta-D-heptose 1-phosphate adenylyltransferase</fullName>
            <ecNumber evidence="1">2.7.7.70</ecNumber>
        </recommendedName>
        <alternativeName>
            <fullName evidence="1">D-glycero-beta-D-manno-heptose 1-phosphate adenylyltransferase</fullName>
        </alternativeName>
    </domain>
</protein>
<comment type="function">
    <text evidence="1">Catalyzes the phosphorylation of D-glycero-D-manno-heptose 7-phosphate at the C-1 position to selectively form D-glycero-beta-D-manno-heptose-1,7-bisphosphate.</text>
</comment>
<comment type="function">
    <text evidence="1">Catalyzes the ADP transfer from ATP to D-glycero-beta-D-manno-heptose 1-phosphate, yielding ADP-D-glycero-beta-D-manno-heptose.</text>
</comment>
<comment type="catalytic activity">
    <reaction evidence="1">
        <text>D-glycero-beta-D-manno-heptose 7-phosphate + ATP = D-glycero-beta-D-manno-heptose 1,7-bisphosphate + ADP + H(+)</text>
        <dbReference type="Rhea" id="RHEA:27473"/>
        <dbReference type="ChEBI" id="CHEBI:15378"/>
        <dbReference type="ChEBI" id="CHEBI:30616"/>
        <dbReference type="ChEBI" id="CHEBI:60204"/>
        <dbReference type="ChEBI" id="CHEBI:60208"/>
        <dbReference type="ChEBI" id="CHEBI:456216"/>
        <dbReference type="EC" id="2.7.1.167"/>
    </reaction>
</comment>
<comment type="catalytic activity">
    <reaction evidence="1">
        <text>D-glycero-beta-D-manno-heptose 1-phosphate + ATP + H(+) = ADP-D-glycero-beta-D-manno-heptose + diphosphate</text>
        <dbReference type="Rhea" id="RHEA:27465"/>
        <dbReference type="ChEBI" id="CHEBI:15378"/>
        <dbReference type="ChEBI" id="CHEBI:30616"/>
        <dbReference type="ChEBI" id="CHEBI:33019"/>
        <dbReference type="ChEBI" id="CHEBI:59967"/>
        <dbReference type="ChEBI" id="CHEBI:61593"/>
        <dbReference type="EC" id="2.7.7.70"/>
    </reaction>
</comment>
<comment type="pathway">
    <text evidence="1">Nucleotide-sugar biosynthesis; ADP-L-glycero-beta-D-manno-heptose biosynthesis; ADP-L-glycero-beta-D-manno-heptose from D-glycero-beta-D-manno-heptose 7-phosphate: step 1/4.</text>
</comment>
<comment type="pathway">
    <text evidence="1">Nucleotide-sugar biosynthesis; ADP-L-glycero-beta-D-manno-heptose biosynthesis; ADP-L-glycero-beta-D-manno-heptose from D-glycero-beta-D-manno-heptose 7-phosphate: step 3/4.</text>
</comment>
<comment type="subunit">
    <text evidence="1">Homodimer.</text>
</comment>
<comment type="similarity">
    <text evidence="1">In the N-terminal section; belongs to the carbohydrate kinase PfkB family.</text>
</comment>
<comment type="similarity">
    <text evidence="1">In the C-terminal section; belongs to the cytidylyltransferase family.</text>
</comment>